<proteinExistence type="inferred from homology"/>
<comment type="similarity">
    <text evidence="1">Belongs to the universal ribosomal protein uS2 family.</text>
</comment>
<dbReference type="EMBL" id="CP000736">
    <property type="protein sequence ID" value="ABR52192.1"/>
    <property type="molecule type" value="Genomic_DNA"/>
</dbReference>
<dbReference type="SMR" id="A6U174"/>
<dbReference type="KEGG" id="sah:SaurJH1_1341"/>
<dbReference type="HOGENOM" id="CLU_040318_1_2_9"/>
<dbReference type="GO" id="GO:0022627">
    <property type="term" value="C:cytosolic small ribosomal subunit"/>
    <property type="evidence" value="ECO:0007669"/>
    <property type="project" value="TreeGrafter"/>
</dbReference>
<dbReference type="GO" id="GO:0003735">
    <property type="term" value="F:structural constituent of ribosome"/>
    <property type="evidence" value="ECO:0007669"/>
    <property type="project" value="InterPro"/>
</dbReference>
<dbReference type="GO" id="GO:0006412">
    <property type="term" value="P:translation"/>
    <property type="evidence" value="ECO:0007669"/>
    <property type="project" value="UniProtKB-UniRule"/>
</dbReference>
<dbReference type="CDD" id="cd01425">
    <property type="entry name" value="RPS2"/>
    <property type="match status" value="1"/>
</dbReference>
<dbReference type="FunFam" id="1.10.287.610:FF:000001">
    <property type="entry name" value="30S ribosomal protein S2"/>
    <property type="match status" value="1"/>
</dbReference>
<dbReference type="Gene3D" id="3.40.50.10490">
    <property type="entry name" value="Glucose-6-phosphate isomerase like protein, domain 1"/>
    <property type="match status" value="1"/>
</dbReference>
<dbReference type="Gene3D" id="1.10.287.610">
    <property type="entry name" value="Helix hairpin bin"/>
    <property type="match status" value="1"/>
</dbReference>
<dbReference type="HAMAP" id="MF_00291_B">
    <property type="entry name" value="Ribosomal_uS2_B"/>
    <property type="match status" value="1"/>
</dbReference>
<dbReference type="InterPro" id="IPR001865">
    <property type="entry name" value="Ribosomal_uS2"/>
</dbReference>
<dbReference type="InterPro" id="IPR005706">
    <property type="entry name" value="Ribosomal_uS2_bac/mit/plastid"/>
</dbReference>
<dbReference type="InterPro" id="IPR018130">
    <property type="entry name" value="Ribosomal_uS2_CS"/>
</dbReference>
<dbReference type="InterPro" id="IPR023591">
    <property type="entry name" value="Ribosomal_uS2_flav_dom_sf"/>
</dbReference>
<dbReference type="NCBIfam" id="TIGR01011">
    <property type="entry name" value="rpsB_bact"/>
    <property type="match status" value="1"/>
</dbReference>
<dbReference type="PANTHER" id="PTHR12534">
    <property type="entry name" value="30S RIBOSOMAL PROTEIN S2 PROKARYOTIC AND ORGANELLAR"/>
    <property type="match status" value="1"/>
</dbReference>
<dbReference type="PANTHER" id="PTHR12534:SF0">
    <property type="entry name" value="SMALL RIBOSOMAL SUBUNIT PROTEIN US2M"/>
    <property type="match status" value="1"/>
</dbReference>
<dbReference type="Pfam" id="PF00318">
    <property type="entry name" value="Ribosomal_S2"/>
    <property type="match status" value="1"/>
</dbReference>
<dbReference type="PRINTS" id="PR00395">
    <property type="entry name" value="RIBOSOMALS2"/>
</dbReference>
<dbReference type="SUPFAM" id="SSF52313">
    <property type="entry name" value="Ribosomal protein S2"/>
    <property type="match status" value="1"/>
</dbReference>
<dbReference type="PROSITE" id="PS00962">
    <property type="entry name" value="RIBOSOMAL_S2_1"/>
    <property type="match status" value="1"/>
</dbReference>
<dbReference type="PROSITE" id="PS00963">
    <property type="entry name" value="RIBOSOMAL_S2_2"/>
    <property type="match status" value="1"/>
</dbReference>
<accession>A6U174</accession>
<reference key="1">
    <citation type="submission" date="2007-06" db="EMBL/GenBank/DDBJ databases">
        <title>Complete sequence of chromosome of Staphylococcus aureus subsp. aureus JH1.</title>
        <authorList>
            <consortium name="US DOE Joint Genome Institute"/>
            <person name="Copeland A."/>
            <person name="Lucas S."/>
            <person name="Lapidus A."/>
            <person name="Barry K."/>
            <person name="Detter J.C."/>
            <person name="Glavina del Rio T."/>
            <person name="Hammon N."/>
            <person name="Israni S."/>
            <person name="Dalin E."/>
            <person name="Tice H."/>
            <person name="Pitluck S."/>
            <person name="Chain P."/>
            <person name="Malfatti S."/>
            <person name="Shin M."/>
            <person name="Vergez L."/>
            <person name="Schmutz J."/>
            <person name="Larimer F."/>
            <person name="Land M."/>
            <person name="Hauser L."/>
            <person name="Kyrpides N."/>
            <person name="Ivanova N."/>
            <person name="Tomasz A."/>
            <person name="Richardson P."/>
        </authorList>
    </citation>
    <scope>NUCLEOTIDE SEQUENCE [LARGE SCALE GENOMIC DNA]</scope>
    <source>
        <strain>JH1</strain>
    </source>
</reference>
<sequence length="255" mass="29122">MAVISMKQLLEAGVHFGHQTRRWNPKMKKYIFTERNGIYIIDLQKTVRKVDEAYNFLKQVSEDGGQVLFVGTKKQAQESVKSEAERAGQFYINQRWLGGLLTNYKTISKRIKRISEIEKMEEDGLFEVLPKKEVVELKKEYDRLIKFLGGIRDMKSMPQALFVVDPRKERNAIAEARKLNIPIVGIVDTNCDPDEIDYVIPANDDAIRAVKLLTAKMADAILEGQQGVSNEEVAAEQNIDLDEKEKSEETEATEE</sequence>
<organism>
    <name type="scientific">Staphylococcus aureus (strain JH1)</name>
    <dbReference type="NCBI Taxonomy" id="359787"/>
    <lineage>
        <taxon>Bacteria</taxon>
        <taxon>Bacillati</taxon>
        <taxon>Bacillota</taxon>
        <taxon>Bacilli</taxon>
        <taxon>Bacillales</taxon>
        <taxon>Staphylococcaceae</taxon>
        <taxon>Staphylococcus</taxon>
    </lineage>
</organism>
<keyword id="KW-0687">Ribonucleoprotein</keyword>
<keyword id="KW-0689">Ribosomal protein</keyword>
<feature type="chain" id="PRO_1000078903" description="Small ribosomal subunit protein uS2">
    <location>
        <begin position="1"/>
        <end position="255"/>
    </location>
</feature>
<feature type="region of interest" description="Disordered" evidence="2">
    <location>
        <begin position="226"/>
        <end position="255"/>
    </location>
</feature>
<evidence type="ECO:0000255" key="1">
    <source>
        <dbReference type="HAMAP-Rule" id="MF_00291"/>
    </source>
</evidence>
<evidence type="ECO:0000256" key="2">
    <source>
        <dbReference type="SAM" id="MobiDB-lite"/>
    </source>
</evidence>
<evidence type="ECO:0000305" key="3"/>
<name>RS2_STAA2</name>
<protein>
    <recommendedName>
        <fullName evidence="1">Small ribosomal subunit protein uS2</fullName>
    </recommendedName>
    <alternativeName>
        <fullName evidence="3">30S ribosomal protein S2</fullName>
    </alternativeName>
</protein>
<gene>
    <name evidence="1" type="primary">rpsB</name>
    <name type="ordered locus">SaurJH1_1341</name>
</gene>